<gene>
    <name type="primary">Rap2c</name>
</gene>
<proteinExistence type="evidence at protein level"/>
<protein>
    <recommendedName>
        <fullName>Ras-related protein Rap-2c</fullName>
        <ecNumber evidence="2">3.6.5.2</ecNumber>
    </recommendedName>
</protein>
<evidence type="ECO:0000250" key="1"/>
<evidence type="ECO:0000250" key="2">
    <source>
        <dbReference type="UniProtKB" id="P10114"/>
    </source>
</evidence>
<evidence type="ECO:0000269" key="3">
    <source>
    </source>
</evidence>
<evidence type="ECO:0000305" key="4"/>
<evidence type="ECO:0000305" key="5">
    <source>
    </source>
</evidence>
<comment type="function">
    <text evidence="3">Small GTP-binding protein which cycles between a GDP-bound inactive and a GTP-bound active form. May play a role in cytoskeletal rearrangements and regulate cell spreading through activation of the effector TNIK. May play a role in SRE-mediated gene transcription.</text>
</comment>
<comment type="catalytic activity">
    <reaction evidence="2">
        <text>GTP + H2O = GDP + phosphate + H(+)</text>
        <dbReference type="Rhea" id="RHEA:19669"/>
        <dbReference type="ChEBI" id="CHEBI:15377"/>
        <dbReference type="ChEBI" id="CHEBI:15378"/>
        <dbReference type="ChEBI" id="CHEBI:37565"/>
        <dbReference type="ChEBI" id="CHEBI:43474"/>
        <dbReference type="ChEBI" id="CHEBI:58189"/>
        <dbReference type="EC" id="3.6.5.2"/>
    </reaction>
</comment>
<comment type="subcellular location">
    <subcellularLocation>
        <location evidence="1">Cytoplasm</location>
    </subcellularLocation>
    <subcellularLocation>
        <location evidence="3">Recycling endosome membrane</location>
        <topology evidence="3">Lipid-anchor</topology>
        <orientation evidence="3">Cytoplasmic side</orientation>
    </subcellularLocation>
</comment>
<comment type="PTM">
    <text evidence="3">Palmitoylated. Palmitoylation is required for association with recycling endosome membranes and activation of TNIK.</text>
</comment>
<comment type="similarity">
    <text evidence="4">Belongs to the small GTPase superfamily. Ras family.</text>
</comment>
<name>RAP2C_MOUSE</name>
<keyword id="KW-0963">Cytoplasm</keyword>
<keyword id="KW-0967">Endosome</keyword>
<keyword id="KW-0342">GTP-binding</keyword>
<keyword id="KW-0378">Hydrolase</keyword>
<keyword id="KW-0449">Lipoprotein</keyword>
<keyword id="KW-0472">Membrane</keyword>
<keyword id="KW-0488">Methylation</keyword>
<keyword id="KW-0547">Nucleotide-binding</keyword>
<keyword id="KW-0564">Palmitate</keyword>
<keyword id="KW-0636">Prenylation</keyword>
<keyword id="KW-1185">Reference proteome</keyword>
<organism>
    <name type="scientific">Mus musculus</name>
    <name type="common">Mouse</name>
    <dbReference type="NCBI Taxonomy" id="10090"/>
    <lineage>
        <taxon>Eukaryota</taxon>
        <taxon>Metazoa</taxon>
        <taxon>Chordata</taxon>
        <taxon>Craniata</taxon>
        <taxon>Vertebrata</taxon>
        <taxon>Euteleostomi</taxon>
        <taxon>Mammalia</taxon>
        <taxon>Eutheria</taxon>
        <taxon>Euarchontoglires</taxon>
        <taxon>Glires</taxon>
        <taxon>Rodentia</taxon>
        <taxon>Myomorpha</taxon>
        <taxon>Muroidea</taxon>
        <taxon>Muridae</taxon>
        <taxon>Murinae</taxon>
        <taxon>Mus</taxon>
        <taxon>Mus</taxon>
    </lineage>
</organism>
<dbReference type="EC" id="3.6.5.2" evidence="2"/>
<dbReference type="EMBL" id="AK087971">
    <property type="protein sequence ID" value="BAC40066.1"/>
    <property type="molecule type" value="mRNA"/>
</dbReference>
<dbReference type="EMBL" id="AK146057">
    <property type="protein sequence ID" value="BAE26866.1"/>
    <property type="molecule type" value="mRNA"/>
</dbReference>
<dbReference type="EMBL" id="AK146956">
    <property type="protein sequence ID" value="BAE27564.1"/>
    <property type="molecule type" value="mRNA"/>
</dbReference>
<dbReference type="EMBL" id="AK147015">
    <property type="protein sequence ID" value="BAE27609.1"/>
    <property type="molecule type" value="mRNA"/>
</dbReference>
<dbReference type="EMBL" id="BC027363">
    <property type="protein sequence ID" value="AAH27363.3"/>
    <property type="molecule type" value="mRNA"/>
</dbReference>
<dbReference type="EMBL" id="BC050056">
    <property type="protein sequence ID" value="AAH50056.2"/>
    <property type="molecule type" value="mRNA"/>
</dbReference>
<dbReference type="EMBL" id="BC064814">
    <property type="protein sequence ID" value="AAH64814.2"/>
    <property type="molecule type" value="mRNA"/>
</dbReference>
<dbReference type="EMBL" id="BC094890">
    <property type="protein sequence ID" value="AAH94890.1"/>
    <property type="molecule type" value="mRNA"/>
</dbReference>
<dbReference type="CCDS" id="CCDS30121.1"/>
<dbReference type="RefSeq" id="NP_001405293.1">
    <property type="nucleotide sequence ID" value="NM_001418364.1"/>
</dbReference>
<dbReference type="RefSeq" id="NP_766001.1">
    <property type="nucleotide sequence ID" value="NM_172413.3"/>
</dbReference>
<dbReference type="RefSeq" id="XP_006541608.1">
    <property type="nucleotide sequence ID" value="XM_006541545.2"/>
</dbReference>
<dbReference type="RefSeq" id="XP_006541609.1">
    <property type="nucleotide sequence ID" value="XM_006541546.4"/>
</dbReference>
<dbReference type="SMR" id="Q8BU31"/>
<dbReference type="BioGRID" id="215127">
    <property type="interactions" value="3"/>
</dbReference>
<dbReference type="FunCoup" id="Q8BU31">
    <property type="interactions" value="1484"/>
</dbReference>
<dbReference type="STRING" id="10090.ENSMUSP00000058391"/>
<dbReference type="GlyGen" id="Q8BU31">
    <property type="glycosylation" value="1 site, 1 O-linked glycan (1 site)"/>
</dbReference>
<dbReference type="iPTMnet" id="Q8BU31"/>
<dbReference type="PhosphoSitePlus" id="Q8BU31"/>
<dbReference type="SwissPalm" id="Q8BU31"/>
<dbReference type="jPOST" id="Q8BU31"/>
<dbReference type="PaxDb" id="10090-ENSMUSP00000058391"/>
<dbReference type="PeptideAtlas" id="Q8BU31"/>
<dbReference type="ProteomicsDB" id="254984"/>
<dbReference type="Pumba" id="Q8BU31"/>
<dbReference type="Antibodypedia" id="56035">
    <property type="antibodies" value="116 antibodies from 24 providers"/>
</dbReference>
<dbReference type="DNASU" id="72065"/>
<dbReference type="Ensembl" id="ENSMUST00000053593.8">
    <property type="protein sequence ID" value="ENSMUSP00000058391.8"/>
    <property type="gene ID" value="ENSMUSG00000050029.8"/>
</dbReference>
<dbReference type="GeneID" id="72065"/>
<dbReference type="KEGG" id="mmu:72065"/>
<dbReference type="UCSC" id="uc009tds.1">
    <property type="organism name" value="mouse"/>
</dbReference>
<dbReference type="AGR" id="MGI:1919315"/>
<dbReference type="CTD" id="57826"/>
<dbReference type="MGI" id="MGI:1919315">
    <property type="gene designation" value="Rap2c"/>
</dbReference>
<dbReference type="VEuPathDB" id="HostDB:ENSMUSG00000050029"/>
<dbReference type="eggNOG" id="KOG0395">
    <property type="taxonomic scope" value="Eukaryota"/>
</dbReference>
<dbReference type="GeneTree" id="ENSGT00940000157245"/>
<dbReference type="HOGENOM" id="CLU_041217_9_8_1"/>
<dbReference type="InParanoid" id="Q8BU31"/>
<dbReference type="OMA" id="CEFTEAS"/>
<dbReference type="OrthoDB" id="5976022at2759"/>
<dbReference type="PhylomeDB" id="Q8BU31"/>
<dbReference type="TreeFam" id="TF313014"/>
<dbReference type="Reactome" id="R-MMU-6798695">
    <property type="pathway name" value="Neutrophil degranulation"/>
</dbReference>
<dbReference type="BioGRID-ORCS" id="72065">
    <property type="hits" value="0 hits in 78 CRISPR screens"/>
</dbReference>
<dbReference type="ChiTaRS" id="Rap2c">
    <property type="organism name" value="mouse"/>
</dbReference>
<dbReference type="PRO" id="PR:Q8BU31"/>
<dbReference type="Proteomes" id="UP000000589">
    <property type="component" value="Chromosome X"/>
</dbReference>
<dbReference type="RNAct" id="Q8BU31">
    <property type="molecule type" value="protein"/>
</dbReference>
<dbReference type="Bgee" id="ENSMUSG00000050029">
    <property type="expression patterns" value="Expressed in embryonic post-anal tail and 254 other cell types or tissues"/>
</dbReference>
<dbReference type="GO" id="GO:0005923">
    <property type="term" value="C:bicellular tight junction"/>
    <property type="evidence" value="ECO:0007669"/>
    <property type="project" value="Ensembl"/>
</dbReference>
<dbReference type="GO" id="GO:0044291">
    <property type="term" value="C:cell-cell contact zone"/>
    <property type="evidence" value="ECO:0007669"/>
    <property type="project" value="Ensembl"/>
</dbReference>
<dbReference type="GO" id="GO:0005829">
    <property type="term" value="C:cytosol"/>
    <property type="evidence" value="ECO:0000314"/>
    <property type="project" value="MGI"/>
</dbReference>
<dbReference type="GO" id="GO:0016020">
    <property type="term" value="C:membrane"/>
    <property type="evidence" value="ECO:0000314"/>
    <property type="project" value="MGI"/>
</dbReference>
<dbReference type="GO" id="GO:0005886">
    <property type="term" value="C:plasma membrane"/>
    <property type="evidence" value="ECO:0007669"/>
    <property type="project" value="Ensembl"/>
</dbReference>
<dbReference type="GO" id="GO:0055037">
    <property type="term" value="C:recycling endosome"/>
    <property type="evidence" value="ECO:0000314"/>
    <property type="project" value="MGI"/>
</dbReference>
<dbReference type="GO" id="GO:0055038">
    <property type="term" value="C:recycling endosome membrane"/>
    <property type="evidence" value="ECO:0000314"/>
    <property type="project" value="UniProtKB"/>
</dbReference>
<dbReference type="GO" id="GO:0003925">
    <property type="term" value="F:G protein activity"/>
    <property type="evidence" value="ECO:0007669"/>
    <property type="project" value="UniProtKB-EC"/>
</dbReference>
<dbReference type="GO" id="GO:0019003">
    <property type="term" value="F:GDP binding"/>
    <property type="evidence" value="ECO:0007669"/>
    <property type="project" value="Ensembl"/>
</dbReference>
<dbReference type="GO" id="GO:0005525">
    <property type="term" value="F:GTP binding"/>
    <property type="evidence" value="ECO:0007669"/>
    <property type="project" value="UniProtKB-KW"/>
</dbReference>
<dbReference type="GO" id="GO:0003713">
    <property type="term" value="F:transcription coactivator activity"/>
    <property type="evidence" value="ECO:0007669"/>
    <property type="project" value="Ensembl"/>
</dbReference>
<dbReference type="GO" id="GO:0090557">
    <property type="term" value="P:establishment of endothelial intestinal barrier"/>
    <property type="evidence" value="ECO:0007669"/>
    <property type="project" value="Ensembl"/>
</dbReference>
<dbReference type="GO" id="GO:0030336">
    <property type="term" value="P:negative regulation of cell migration"/>
    <property type="evidence" value="ECO:0000314"/>
    <property type="project" value="MGI"/>
</dbReference>
<dbReference type="GO" id="GO:0032486">
    <property type="term" value="P:Rap protein signal transduction"/>
    <property type="evidence" value="ECO:0000314"/>
    <property type="project" value="UniProtKB"/>
</dbReference>
<dbReference type="GO" id="GO:0061097">
    <property type="term" value="P:regulation of protein tyrosine kinase activity"/>
    <property type="evidence" value="ECO:0000314"/>
    <property type="project" value="UniProtKB"/>
</dbReference>
<dbReference type="CDD" id="cd04176">
    <property type="entry name" value="Rap2"/>
    <property type="match status" value="1"/>
</dbReference>
<dbReference type="FunFam" id="3.40.50.300:FF:000189">
    <property type="entry name" value="Member of ras oncogene family"/>
    <property type="match status" value="1"/>
</dbReference>
<dbReference type="Gene3D" id="3.40.50.300">
    <property type="entry name" value="P-loop containing nucleotide triphosphate hydrolases"/>
    <property type="match status" value="1"/>
</dbReference>
<dbReference type="InterPro" id="IPR027417">
    <property type="entry name" value="P-loop_NTPase"/>
</dbReference>
<dbReference type="InterPro" id="IPR041840">
    <property type="entry name" value="Rap2"/>
</dbReference>
<dbReference type="InterPro" id="IPR005225">
    <property type="entry name" value="Small_GTP-bd"/>
</dbReference>
<dbReference type="InterPro" id="IPR001806">
    <property type="entry name" value="Small_GTPase"/>
</dbReference>
<dbReference type="InterPro" id="IPR020849">
    <property type="entry name" value="Small_GTPase_Ras-type"/>
</dbReference>
<dbReference type="NCBIfam" id="TIGR00231">
    <property type="entry name" value="small_GTP"/>
    <property type="match status" value="1"/>
</dbReference>
<dbReference type="PANTHER" id="PTHR24070">
    <property type="entry name" value="RAS, DI-RAS, AND RHEB FAMILY MEMBERS OF SMALL GTPASE SUPERFAMILY"/>
    <property type="match status" value="1"/>
</dbReference>
<dbReference type="Pfam" id="PF00071">
    <property type="entry name" value="Ras"/>
    <property type="match status" value="1"/>
</dbReference>
<dbReference type="PRINTS" id="PR00449">
    <property type="entry name" value="RASTRNSFRMNG"/>
</dbReference>
<dbReference type="SMART" id="SM00175">
    <property type="entry name" value="RAB"/>
    <property type="match status" value="1"/>
</dbReference>
<dbReference type="SMART" id="SM00173">
    <property type="entry name" value="RAS"/>
    <property type="match status" value="1"/>
</dbReference>
<dbReference type="SMART" id="SM00174">
    <property type="entry name" value="RHO"/>
    <property type="match status" value="1"/>
</dbReference>
<dbReference type="SUPFAM" id="SSF52540">
    <property type="entry name" value="P-loop containing nucleoside triphosphate hydrolases"/>
    <property type="match status" value="1"/>
</dbReference>
<dbReference type="PROSITE" id="PS51421">
    <property type="entry name" value="RAS"/>
    <property type="match status" value="1"/>
</dbReference>
<reference key="1">
    <citation type="journal article" date="2005" name="Science">
        <title>The transcriptional landscape of the mammalian genome.</title>
        <authorList>
            <person name="Carninci P."/>
            <person name="Kasukawa T."/>
            <person name="Katayama S."/>
            <person name="Gough J."/>
            <person name="Frith M.C."/>
            <person name="Maeda N."/>
            <person name="Oyama R."/>
            <person name="Ravasi T."/>
            <person name="Lenhard B."/>
            <person name="Wells C."/>
            <person name="Kodzius R."/>
            <person name="Shimokawa K."/>
            <person name="Bajic V.B."/>
            <person name="Brenner S.E."/>
            <person name="Batalov S."/>
            <person name="Forrest A.R."/>
            <person name="Zavolan M."/>
            <person name="Davis M.J."/>
            <person name="Wilming L.G."/>
            <person name="Aidinis V."/>
            <person name="Allen J.E."/>
            <person name="Ambesi-Impiombato A."/>
            <person name="Apweiler R."/>
            <person name="Aturaliya R.N."/>
            <person name="Bailey T.L."/>
            <person name="Bansal M."/>
            <person name="Baxter L."/>
            <person name="Beisel K.W."/>
            <person name="Bersano T."/>
            <person name="Bono H."/>
            <person name="Chalk A.M."/>
            <person name="Chiu K.P."/>
            <person name="Choudhary V."/>
            <person name="Christoffels A."/>
            <person name="Clutterbuck D.R."/>
            <person name="Crowe M.L."/>
            <person name="Dalla E."/>
            <person name="Dalrymple B.P."/>
            <person name="de Bono B."/>
            <person name="Della Gatta G."/>
            <person name="di Bernardo D."/>
            <person name="Down T."/>
            <person name="Engstrom P."/>
            <person name="Fagiolini M."/>
            <person name="Faulkner G."/>
            <person name="Fletcher C.F."/>
            <person name="Fukushima T."/>
            <person name="Furuno M."/>
            <person name="Futaki S."/>
            <person name="Gariboldi M."/>
            <person name="Georgii-Hemming P."/>
            <person name="Gingeras T.R."/>
            <person name="Gojobori T."/>
            <person name="Green R.E."/>
            <person name="Gustincich S."/>
            <person name="Harbers M."/>
            <person name="Hayashi Y."/>
            <person name="Hensch T.K."/>
            <person name="Hirokawa N."/>
            <person name="Hill D."/>
            <person name="Huminiecki L."/>
            <person name="Iacono M."/>
            <person name="Ikeo K."/>
            <person name="Iwama A."/>
            <person name="Ishikawa T."/>
            <person name="Jakt M."/>
            <person name="Kanapin A."/>
            <person name="Katoh M."/>
            <person name="Kawasawa Y."/>
            <person name="Kelso J."/>
            <person name="Kitamura H."/>
            <person name="Kitano H."/>
            <person name="Kollias G."/>
            <person name="Krishnan S.P."/>
            <person name="Kruger A."/>
            <person name="Kummerfeld S.K."/>
            <person name="Kurochkin I.V."/>
            <person name="Lareau L.F."/>
            <person name="Lazarevic D."/>
            <person name="Lipovich L."/>
            <person name="Liu J."/>
            <person name="Liuni S."/>
            <person name="McWilliam S."/>
            <person name="Madan Babu M."/>
            <person name="Madera M."/>
            <person name="Marchionni L."/>
            <person name="Matsuda H."/>
            <person name="Matsuzawa S."/>
            <person name="Miki H."/>
            <person name="Mignone F."/>
            <person name="Miyake S."/>
            <person name="Morris K."/>
            <person name="Mottagui-Tabar S."/>
            <person name="Mulder N."/>
            <person name="Nakano N."/>
            <person name="Nakauchi H."/>
            <person name="Ng P."/>
            <person name="Nilsson R."/>
            <person name="Nishiguchi S."/>
            <person name="Nishikawa S."/>
            <person name="Nori F."/>
            <person name="Ohara O."/>
            <person name="Okazaki Y."/>
            <person name="Orlando V."/>
            <person name="Pang K.C."/>
            <person name="Pavan W.J."/>
            <person name="Pavesi G."/>
            <person name="Pesole G."/>
            <person name="Petrovsky N."/>
            <person name="Piazza S."/>
            <person name="Reed J."/>
            <person name="Reid J.F."/>
            <person name="Ring B.Z."/>
            <person name="Ringwald M."/>
            <person name="Rost B."/>
            <person name="Ruan Y."/>
            <person name="Salzberg S.L."/>
            <person name="Sandelin A."/>
            <person name="Schneider C."/>
            <person name="Schoenbach C."/>
            <person name="Sekiguchi K."/>
            <person name="Semple C.A."/>
            <person name="Seno S."/>
            <person name="Sessa L."/>
            <person name="Sheng Y."/>
            <person name="Shibata Y."/>
            <person name="Shimada H."/>
            <person name="Shimada K."/>
            <person name="Silva D."/>
            <person name="Sinclair B."/>
            <person name="Sperling S."/>
            <person name="Stupka E."/>
            <person name="Sugiura K."/>
            <person name="Sultana R."/>
            <person name="Takenaka Y."/>
            <person name="Taki K."/>
            <person name="Tammoja K."/>
            <person name="Tan S.L."/>
            <person name="Tang S."/>
            <person name="Taylor M.S."/>
            <person name="Tegner J."/>
            <person name="Teichmann S.A."/>
            <person name="Ueda H.R."/>
            <person name="van Nimwegen E."/>
            <person name="Verardo R."/>
            <person name="Wei C.L."/>
            <person name="Yagi K."/>
            <person name="Yamanishi H."/>
            <person name="Zabarovsky E."/>
            <person name="Zhu S."/>
            <person name="Zimmer A."/>
            <person name="Hide W."/>
            <person name="Bult C."/>
            <person name="Grimmond S.M."/>
            <person name="Teasdale R.D."/>
            <person name="Liu E.T."/>
            <person name="Brusic V."/>
            <person name="Quackenbush J."/>
            <person name="Wahlestedt C."/>
            <person name="Mattick J.S."/>
            <person name="Hume D.A."/>
            <person name="Kai C."/>
            <person name="Sasaki D."/>
            <person name="Tomaru Y."/>
            <person name="Fukuda S."/>
            <person name="Kanamori-Katayama M."/>
            <person name="Suzuki M."/>
            <person name="Aoki J."/>
            <person name="Arakawa T."/>
            <person name="Iida J."/>
            <person name="Imamura K."/>
            <person name="Itoh M."/>
            <person name="Kato T."/>
            <person name="Kawaji H."/>
            <person name="Kawagashira N."/>
            <person name="Kawashima T."/>
            <person name="Kojima M."/>
            <person name="Kondo S."/>
            <person name="Konno H."/>
            <person name="Nakano K."/>
            <person name="Ninomiya N."/>
            <person name="Nishio T."/>
            <person name="Okada M."/>
            <person name="Plessy C."/>
            <person name="Shibata K."/>
            <person name="Shiraki T."/>
            <person name="Suzuki S."/>
            <person name="Tagami M."/>
            <person name="Waki K."/>
            <person name="Watahiki A."/>
            <person name="Okamura-Oho Y."/>
            <person name="Suzuki H."/>
            <person name="Kawai J."/>
            <person name="Hayashizaki Y."/>
        </authorList>
    </citation>
    <scope>NUCLEOTIDE SEQUENCE [LARGE SCALE MRNA]</scope>
    <source>
        <strain>C57BL/6J</strain>
        <strain>NOD</strain>
        <tissue>Embryonic heart</tissue>
        <tissue>Embryonic liver</tissue>
        <tissue>Thymus</tissue>
    </source>
</reference>
<reference key="2">
    <citation type="journal article" date="2004" name="Genome Res.">
        <title>The status, quality, and expansion of the NIH full-length cDNA project: the Mammalian Gene Collection (MGC).</title>
        <authorList>
            <consortium name="The MGC Project Team"/>
        </authorList>
    </citation>
    <scope>NUCLEOTIDE SEQUENCE [LARGE SCALE MRNA]</scope>
    <source>
        <strain>C57BL/6J</strain>
        <strain>FVB/N</strain>
        <tissue>Embryo</tissue>
        <tissue>Eye</tissue>
        <tissue>Limb</tissue>
        <tissue>Mammary gland</tissue>
    </source>
</reference>
<reference key="3">
    <citation type="journal article" date="2009" name="Biochem. Biophys. Res. Commun.">
        <title>Rap2 function requires palmitoylation and recycling endosome localization.</title>
        <authorList>
            <person name="Uechi Y."/>
            <person name="Bayarjargal M."/>
            <person name="Umikawa M."/>
            <person name="Oshiro M."/>
            <person name="Takei K."/>
            <person name="Yamashiro Y."/>
            <person name="Asato T."/>
            <person name="Endo S."/>
            <person name="Misaki R."/>
            <person name="Taguchi T."/>
            <person name="Kariya K."/>
        </authorList>
    </citation>
    <scope>FUNCTION</scope>
    <scope>SUBCELLULAR LOCATION</scope>
    <scope>ISOPRENYLATION AT CYS-180</scope>
    <scope>METHYLATION AT CYS-180</scope>
    <scope>PALMITOYLATION AT CYS-176 AND CYS-177</scope>
    <scope>MUTAGENESIS OF CYS-176; CYS-177 AND CYS-180</scope>
</reference>
<reference key="4">
    <citation type="journal article" date="2010" name="Cell">
        <title>A tissue-specific atlas of mouse protein phosphorylation and expression.</title>
        <authorList>
            <person name="Huttlin E.L."/>
            <person name="Jedrychowski M.P."/>
            <person name="Elias J.E."/>
            <person name="Goswami T."/>
            <person name="Rad R."/>
            <person name="Beausoleil S.A."/>
            <person name="Villen J."/>
            <person name="Haas W."/>
            <person name="Sowa M.E."/>
            <person name="Gygi S.P."/>
        </authorList>
    </citation>
    <scope>IDENTIFICATION BY MASS SPECTROMETRY [LARGE SCALE ANALYSIS]</scope>
    <source>
        <tissue>Brain</tissue>
        <tissue>Brown adipose tissue</tissue>
        <tissue>Liver</tissue>
        <tissue>Lung</tissue>
        <tissue>Pancreas</tissue>
        <tissue>Spleen</tissue>
        <tissue>Testis</tissue>
    </source>
</reference>
<sequence length="183" mass="20745">MREYKVVVLGSGGVGKSALTVQFVTGTFIEKYDPTIEDFYRKEIEVDSSPSVLEILDTAGTEQFASMRDLYIKNGQGFILVYSLVNQQSFQDIKPMRDQIVRVKRYEKVPLILVGNKVDLEPEREVMSSEGRALAQEWGCPFMETSAKSKSMVDELFAEIVRQMNYSSLPEKQDQCCTTCVVQ</sequence>
<accession>Q8BU31</accession>
<accession>Q504Q0</accession>
<accession>Q6P1Y7</accession>
<accession>Q810J4</accession>
<accession>Q8R2P4</accession>
<feature type="chain" id="PRO_0000030223" description="Ras-related protein Rap-2c">
    <location>
        <begin position="1"/>
        <end position="180"/>
    </location>
</feature>
<feature type="propeptide" id="PRO_0000030224" description="Removed in mature form" evidence="5">
    <location>
        <begin position="181"/>
        <end position="183"/>
    </location>
</feature>
<feature type="short sequence motif" description="Effector region" evidence="4">
    <location>
        <begin position="32"/>
        <end position="40"/>
    </location>
</feature>
<feature type="binding site" evidence="1">
    <location>
        <begin position="10"/>
        <end position="17"/>
    </location>
    <ligand>
        <name>GTP</name>
        <dbReference type="ChEBI" id="CHEBI:37565"/>
    </ligand>
</feature>
<feature type="binding site" evidence="1">
    <location>
        <begin position="57"/>
        <end position="61"/>
    </location>
    <ligand>
        <name>GTP</name>
        <dbReference type="ChEBI" id="CHEBI:37565"/>
    </ligand>
</feature>
<feature type="binding site" evidence="1">
    <location>
        <begin position="116"/>
        <end position="119"/>
    </location>
    <ligand>
        <name>GTP</name>
        <dbReference type="ChEBI" id="CHEBI:37565"/>
    </ligand>
</feature>
<feature type="modified residue" description="Cysteine methyl ester" evidence="5">
    <location>
        <position position="180"/>
    </location>
</feature>
<feature type="lipid moiety-binding region" description="S-palmitoyl cysteine" evidence="3">
    <location>
        <position position="176"/>
    </location>
</feature>
<feature type="lipid moiety-binding region" description="S-palmitoyl cysteine" evidence="3">
    <location>
        <position position="177"/>
    </location>
</feature>
<feature type="lipid moiety-binding region" description="S-geranylgeranyl cysteine" evidence="3">
    <location>
        <position position="180"/>
    </location>
</feature>
<feature type="mutagenesis site" description="Loss of association with the recycling endosome membranes and loss of TNIK activation; when associated with C-177." evidence="3">
    <original>C</original>
    <variation>G</variation>
    <location>
        <position position="176"/>
    </location>
</feature>
<feature type="mutagenesis site" description="Loss of association with the recycling endosome membranes and loss of TNIK activation; when associated with C-176." evidence="3">
    <original>C</original>
    <variation>G</variation>
    <location>
        <position position="177"/>
    </location>
</feature>
<feature type="mutagenesis site" description="Loss of association with membranes." evidence="3">
    <original>C</original>
    <variation>A</variation>
    <location>
        <position position="180"/>
    </location>
</feature>
<feature type="sequence conflict" description="In Ref. 2; AAH27363." evidence="4" ref="2">
    <original>S</original>
    <variation>N</variation>
    <location>
        <position position="83"/>
    </location>
</feature>